<proteinExistence type="evidence at transcript level"/>
<keyword id="KW-0025">Alternative splicing</keyword>
<keyword id="KW-0053">Apoptosis</keyword>
<keyword id="KW-1003">Cell membrane</keyword>
<keyword id="KW-0325">Glycoprotein</keyword>
<keyword id="KW-0472">Membrane</keyword>
<keyword id="KW-0628">Postsynaptic cell membrane</keyword>
<keyword id="KW-1185">Reference proteome</keyword>
<keyword id="KW-0770">Synapse</keyword>
<keyword id="KW-0812">Transmembrane</keyword>
<keyword id="KW-1133">Transmembrane helix</keyword>
<accession>Q8K097</accession>
<accession>Q3TY22</accession>
<accession>Q8K1F6</accession>
<accession>Q9D6K4</accession>
<gene>
    <name type="primary">Faim2</name>
    <name type="synonym">Kiaa0950</name>
    <name type="synonym">Lfg</name>
    <name type="synonym">Lfg2</name>
    <name type="synonym">Nmp35</name>
</gene>
<dbReference type="EMBL" id="AF468028">
    <property type="protein sequence ID" value="AAM46781.1"/>
    <property type="molecule type" value="mRNA"/>
</dbReference>
<dbReference type="EMBL" id="AK013476">
    <property type="protein sequence ID" value="BAB28874.1"/>
    <property type="molecule type" value="mRNA"/>
</dbReference>
<dbReference type="EMBL" id="AK030513">
    <property type="protein sequence ID" value="BAC26999.1"/>
    <property type="molecule type" value="mRNA"/>
</dbReference>
<dbReference type="EMBL" id="AK129246">
    <property type="protein sequence ID" value="BAC98056.1"/>
    <property type="status" value="ALT_INIT"/>
    <property type="molecule type" value="mRNA"/>
</dbReference>
<dbReference type="EMBL" id="AK158960">
    <property type="protein sequence ID" value="BAE34742.1"/>
    <property type="molecule type" value="mRNA"/>
</dbReference>
<dbReference type="EMBL" id="BC032278">
    <property type="protein sequence ID" value="AAH32278.1"/>
    <property type="molecule type" value="mRNA"/>
</dbReference>
<dbReference type="CCDS" id="CCDS37203.1">
    <molecule id="Q8K097-1"/>
</dbReference>
<dbReference type="CCDS" id="CCDS88840.1">
    <molecule id="Q8K097-2"/>
</dbReference>
<dbReference type="RefSeq" id="NP_001033747.1">
    <molecule id="Q8K097-2"/>
    <property type="nucleotide sequence ID" value="NM_001038658.2"/>
</dbReference>
<dbReference type="RefSeq" id="NP_082500.2">
    <molecule id="Q8K097-1"/>
    <property type="nucleotide sequence ID" value="NM_028224.4"/>
</dbReference>
<dbReference type="RefSeq" id="XP_006521512.1">
    <molecule id="Q8K097-1"/>
    <property type="nucleotide sequence ID" value="XM_006521449.5"/>
</dbReference>
<dbReference type="SMR" id="Q8K097"/>
<dbReference type="BioGRID" id="215353">
    <property type="interactions" value="2"/>
</dbReference>
<dbReference type="FunCoup" id="Q8K097">
    <property type="interactions" value="69"/>
</dbReference>
<dbReference type="STRING" id="10090.ENSMUSP00000023750"/>
<dbReference type="GlyCosmos" id="Q8K097">
    <property type="glycosylation" value="1 site, No reported glycans"/>
</dbReference>
<dbReference type="GlyGen" id="Q8K097">
    <property type="glycosylation" value="1 site"/>
</dbReference>
<dbReference type="iPTMnet" id="Q8K097"/>
<dbReference type="PhosphoSitePlus" id="Q8K097"/>
<dbReference type="SwissPalm" id="Q8K097"/>
<dbReference type="PaxDb" id="10090-ENSMUSP00000023750"/>
<dbReference type="PeptideAtlas" id="Q8K097"/>
<dbReference type="ProteomicsDB" id="291940">
    <molecule id="Q8K097-1"/>
</dbReference>
<dbReference type="ProteomicsDB" id="291941">
    <molecule id="Q8K097-2"/>
</dbReference>
<dbReference type="Antibodypedia" id="14095">
    <property type="antibodies" value="258 antibodies from 32 providers"/>
</dbReference>
<dbReference type="DNASU" id="72393"/>
<dbReference type="Ensembl" id="ENSMUST00000023750.9">
    <molecule id="Q8K097-1"/>
    <property type="protein sequence ID" value="ENSMUSP00000023750.8"/>
    <property type="gene ID" value="ENSMUSG00000023011.9"/>
</dbReference>
<dbReference type="Ensembl" id="ENSMUST00000231171.2">
    <molecule id="Q8K097-2"/>
    <property type="protein sequence ID" value="ENSMUSP00000155195.2"/>
    <property type="gene ID" value="ENSMUSG00000023011.9"/>
</dbReference>
<dbReference type="GeneID" id="72393"/>
<dbReference type="KEGG" id="mmu:72393"/>
<dbReference type="UCSC" id="uc007xpp.2">
    <molecule id="Q8K097-2"/>
    <property type="organism name" value="mouse"/>
</dbReference>
<dbReference type="UCSC" id="uc007xpq.2">
    <molecule id="Q8K097-1"/>
    <property type="organism name" value="mouse"/>
</dbReference>
<dbReference type="AGR" id="MGI:1919643"/>
<dbReference type="CTD" id="23017"/>
<dbReference type="MGI" id="MGI:1919643">
    <property type="gene designation" value="Faim2"/>
</dbReference>
<dbReference type="VEuPathDB" id="HostDB:ENSMUSG00000023011"/>
<dbReference type="eggNOG" id="KOG2322">
    <property type="taxonomic scope" value="Eukaryota"/>
</dbReference>
<dbReference type="GeneTree" id="ENSGT01050000244890"/>
<dbReference type="HOGENOM" id="CLU_058671_3_2_1"/>
<dbReference type="InParanoid" id="Q8K097"/>
<dbReference type="OMA" id="FTGWYVY"/>
<dbReference type="OrthoDB" id="7933078at2759"/>
<dbReference type="PhylomeDB" id="Q8K097"/>
<dbReference type="TreeFam" id="TF319996"/>
<dbReference type="BioGRID-ORCS" id="72393">
    <property type="hits" value="0 hits in 76 CRISPR screens"/>
</dbReference>
<dbReference type="ChiTaRS" id="Faim2">
    <property type="organism name" value="mouse"/>
</dbReference>
<dbReference type="PRO" id="PR:Q8K097"/>
<dbReference type="Proteomes" id="UP000000589">
    <property type="component" value="Chromosome 15"/>
</dbReference>
<dbReference type="RNAct" id="Q8K097">
    <property type="molecule type" value="protein"/>
</dbReference>
<dbReference type="Bgee" id="ENSMUSG00000023011">
    <property type="expression patterns" value="Expressed in superior frontal gyrus and 94 other cell types or tissues"/>
</dbReference>
<dbReference type="GO" id="GO:0005783">
    <property type="term" value="C:endoplasmic reticulum"/>
    <property type="evidence" value="ECO:0000314"/>
    <property type="project" value="MGI"/>
</dbReference>
<dbReference type="GO" id="GO:0005794">
    <property type="term" value="C:Golgi apparatus"/>
    <property type="evidence" value="ECO:0000314"/>
    <property type="project" value="MGI"/>
</dbReference>
<dbReference type="GO" id="GO:0000139">
    <property type="term" value="C:Golgi membrane"/>
    <property type="evidence" value="ECO:0007669"/>
    <property type="project" value="Ensembl"/>
</dbReference>
<dbReference type="GO" id="GO:0016020">
    <property type="term" value="C:membrane"/>
    <property type="evidence" value="ECO:0000314"/>
    <property type="project" value="MGI"/>
</dbReference>
<dbReference type="GO" id="GO:0045121">
    <property type="term" value="C:membrane raft"/>
    <property type="evidence" value="ECO:0000314"/>
    <property type="project" value="UniProtKB"/>
</dbReference>
<dbReference type="GO" id="GO:0045211">
    <property type="term" value="C:postsynaptic membrane"/>
    <property type="evidence" value="ECO:0007669"/>
    <property type="project" value="UniProtKB-SubCell"/>
</dbReference>
<dbReference type="GO" id="GO:0097190">
    <property type="term" value="P:apoptotic signaling pathway"/>
    <property type="evidence" value="ECO:0000315"/>
    <property type="project" value="MGI"/>
</dbReference>
<dbReference type="GO" id="GO:0021681">
    <property type="term" value="P:cerebellar granular layer development"/>
    <property type="evidence" value="ECO:0000315"/>
    <property type="project" value="UniProtKB"/>
</dbReference>
<dbReference type="GO" id="GO:0021702">
    <property type="term" value="P:cerebellar Purkinje cell differentiation"/>
    <property type="evidence" value="ECO:0000315"/>
    <property type="project" value="UniProtKB"/>
</dbReference>
<dbReference type="GO" id="GO:0021680">
    <property type="term" value="P:cerebellar Purkinje cell layer development"/>
    <property type="evidence" value="ECO:0000315"/>
    <property type="project" value="UniProtKB"/>
</dbReference>
<dbReference type="GO" id="GO:0021549">
    <property type="term" value="P:cerebellum development"/>
    <property type="evidence" value="ECO:0000315"/>
    <property type="project" value="UniProtKB"/>
</dbReference>
<dbReference type="GO" id="GO:2001234">
    <property type="term" value="P:negative regulation of apoptotic signaling pathway"/>
    <property type="evidence" value="ECO:0000315"/>
    <property type="project" value="MGI"/>
</dbReference>
<dbReference type="GO" id="GO:1902042">
    <property type="term" value="P:negative regulation of extrinsic apoptotic signaling pathway via death domain receptors"/>
    <property type="evidence" value="ECO:0000266"/>
    <property type="project" value="MGI"/>
</dbReference>
<dbReference type="GO" id="GO:0043524">
    <property type="term" value="P:negative regulation of neuron apoptotic process"/>
    <property type="evidence" value="ECO:0000315"/>
    <property type="project" value="MGI"/>
</dbReference>
<dbReference type="GO" id="GO:0051402">
    <property type="term" value="P:neuron apoptotic process"/>
    <property type="evidence" value="ECO:0000315"/>
    <property type="project" value="MGI"/>
</dbReference>
<dbReference type="GO" id="GO:0043523">
    <property type="term" value="P:regulation of neuron apoptotic process"/>
    <property type="evidence" value="ECO:0000315"/>
    <property type="project" value="UniProtKB"/>
</dbReference>
<dbReference type="GO" id="GO:0002931">
    <property type="term" value="P:response to ischemia"/>
    <property type="evidence" value="ECO:0000315"/>
    <property type="project" value="MGI"/>
</dbReference>
<dbReference type="CDD" id="cd10428">
    <property type="entry name" value="LFG_like"/>
    <property type="match status" value="1"/>
</dbReference>
<dbReference type="InterPro" id="IPR006214">
    <property type="entry name" value="Bax_inhibitor_1-related"/>
</dbReference>
<dbReference type="PANTHER" id="PTHR23291">
    <property type="entry name" value="BAX INHIBITOR-RELATED"/>
    <property type="match status" value="1"/>
</dbReference>
<dbReference type="PANTHER" id="PTHR23291:SF18">
    <property type="entry name" value="PROTEIN LIFEGUARD 2"/>
    <property type="match status" value="1"/>
</dbReference>
<dbReference type="Pfam" id="PF01027">
    <property type="entry name" value="Bax1-I"/>
    <property type="match status" value="1"/>
</dbReference>
<comment type="function">
    <text evidence="4 5 6">Antiapoptotic protein which protects cells uniquely from Fas-induced apoptosis. Regulates Fas-mediated apoptosis in neurons by interfering with caspase-8 activation. Plays a role in cerebellar development by affecting cerebellar size, internal granular layer (IGL) thickness, and Purkinje cell (PC) development.</text>
</comment>
<comment type="subunit">
    <text evidence="1">Interacts with FAS/TNFRSF6 and BAX.</text>
</comment>
<comment type="subcellular location">
    <subcellularLocation>
        <location evidence="1">Cell membrane</location>
        <topology evidence="1">Multi-pass membrane protein</topology>
    </subcellularLocation>
    <subcellularLocation>
        <location evidence="4">Membrane raft</location>
    </subcellularLocation>
    <subcellularLocation>
        <location evidence="1">Postsynaptic cell membrane</location>
    </subcellularLocation>
</comment>
<comment type="alternative products">
    <event type="alternative splicing"/>
    <isoform>
        <id>Q8K097-1</id>
        <name>1</name>
        <name>Long</name>
        <name>LFG-L</name>
        <sequence type="displayed"/>
    </isoform>
    <isoform>
        <id>Q8K097-2</id>
        <name>2</name>
        <name>Short</name>
        <name>LFG-S</name>
        <sequence type="described" ref="VSP_008994"/>
    </isoform>
</comment>
<comment type="tissue specificity">
    <text evidence="4 6">Brain. Highly expressed in cerebellum, also found in cortex, olfactory bulb, and hippocampus.</text>
</comment>
<comment type="disruption phenotype">
    <text evidence="6">Mice show reduced cerebellar size and internal granular layer (IGL) thickness in early developmental stages, delayed Purkinje Cell (PC) development, with an abnormal morphology and reduced cellular density, increased caspase-8 and caspase-3 activity in PCs and higher sensitivity to Fas-mediated apoptosis.</text>
</comment>
<comment type="similarity">
    <text evidence="8">Belongs to the BI1 family. LFG subfamily.</text>
</comment>
<comment type="sequence caution" evidence="8">
    <conflict type="erroneous initiation">
        <sequence resource="EMBL-CDS" id="BAC98056"/>
    </conflict>
    <text>Extended N-terminus.</text>
</comment>
<organism>
    <name type="scientific">Mus musculus</name>
    <name type="common">Mouse</name>
    <dbReference type="NCBI Taxonomy" id="10090"/>
    <lineage>
        <taxon>Eukaryota</taxon>
        <taxon>Metazoa</taxon>
        <taxon>Chordata</taxon>
        <taxon>Craniata</taxon>
        <taxon>Vertebrata</taxon>
        <taxon>Euteleostomi</taxon>
        <taxon>Mammalia</taxon>
        <taxon>Eutheria</taxon>
        <taxon>Euarchontoglires</taxon>
        <taxon>Glires</taxon>
        <taxon>Rodentia</taxon>
        <taxon>Myomorpha</taxon>
        <taxon>Muroidea</taxon>
        <taxon>Muridae</taxon>
        <taxon>Murinae</taxon>
        <taxon>Mus</taxon>
        <taxon>Mus</taxon>
    </lineage>
</organism>
<feature type="chain" id="PRO_0000179088" description="Protein lifeguard 2">
    <location>
        <begin position="1"/>
        <end position="317"/>
    </location>
</feature>
<feature type="transmembrane region" description="Helical" evidence="2">
    <location>
        <begin position="107"/>
        <end position="127"/>
    </location>
</feature>
<feature type="transmembrane region" description="Helical" evidence="2">
    <location>
        <begin position="139"/>
        <end position="159"/>
    </location>
</feature>
<feature type="transmembrane region" description="Helical" evidence="2">
    <location>
        <begin position="166"/>
        <end position="186"/>
    </location>
</feature>
<feature type="transmembrane region" description="Helical" evidence="2">
    <location>
        <begin position="195"/>
        <end position="215"/>
    </location>
</feature>
<feature type="transmembrane region" description="Helical" evidence="2">
    <location>
        <begin position="226"/>
        <end position="246"/>
    </location>
</feature>
<feature type="transmembrane region" description="Helical" evidence="2">
    <location>
        <begin position="252"/>
        <end position="272"/>
    </location>
</feature>
<feature type="transmembrane region" description="Helical" evidence="2">
    <location>
        <begin position="291"/>
        <end position="311"/>
    </location>
</feature>
<feature type="region of interest" description="Disordered" evidence="3">
    <location>
        <begin position="1"/>
        <end position="54"/>
    </location>
</feature>
<feature type="glycosylation site" description="N-linked (GlcNAc...) asparagine" evidence="2">
    <location>
        <position position="192"/>
    </location>
</feature>
<feature type="splice variant" id="VSP_008994" description="In isoform 2." evidence="7">
    <original>SGSSGYEGGFPAG</original>
    <variation>R</variation>
    <location>
        <begin position="72"/>
        <end position="84"/>
    </location>
</feature>
<feature type="sequence conflict" description="In Ref. 2; BAC98056." evidence="8" ref="2">
    <original>A</original>
    <variation>T</variation>
    <location>
        <position position="256"/>
    </location>
</feature>
<feature type="sequence conflict" description="In Ref. 1; AAM46781." evidence="8" ref="1">
    <original>F</original>
    <variation>Y</variation>
    <location>
        <position position="312"/>
    </location>
</feature>
<evidence type="ECO:0000250" key="1"/>
<evidence type="ECO:0000255" key="2"/>
<evidence type="ECO:0000256" key="3">
    <source>
        <dbReference type="SAM" id="MobiDB-lite"/>
    </source>
</evidence>
<evidence type="ECO:0000269" key="4">
    <source>
    </source>
</evidence>
<evidence type="ECO:0000269" key="5">
    <source>
    </source>
</evidence>
<evidence type="ECO:0000269" key="6">
    <source>
    </source>
</evidence>
<evidence type="ECO:0000303" key="7">
    <source>
    </source>
</evidence>
<evidence type="ECO:0000305" key="8"/>
<name>LFG2_MOUSE</name>
<protein>
    <recommendedName>
        <fullName>Protein lifeguard 2</fullName>
    </recommendedName>
    <alternativeName>
        <fullName>Fas apoptotic inhibitory molecule 2</fullName>
    </alternativeName>
    <alternativeName>
        <fullName>Neural membrane protein 35</fullName>
    </alternativeName>
</protein>
<reference key="1">
    <citation type="submission" date="2002-01" db="EMBL/GenBank/DDBJ databases">
        <title>Cloning and characterization of the long form of mouse lifeguard (LFG-L), an anti Fas-apoptotic molecule.</title>
        <authorList>
            <person name="Sole C."/>
            <person name="Segura M.F."/>
            <person name="Bayascas J.R."/>
            <person name="Comella J.X."/>
        </authorList>
    </citation>
    <scope>NUCLEOTIDE SEQUENCE [MRNA] (ISOFORM 1)</scope>
    <source>
        <strain>C57BL/6J</strain>
        <tissue>Retina</tissue>
    </source>
</reference>
<reference key="2">
    <citation type="journal article" date="2003" name="DNA Res.">
        <title>Prediction of the coding sequences of mouse homologues of KIAA gene: II. The complete nucleotide sequences of 400 mouse KIAA-homologous cDNAs identified by screening of terminal sequences of cDNA clones randomly sampled from size-fractionated libraries.</title>
        <authorList>
            <person name="Okazaki N."/>
            <person name="Kikuno R."/>
            <person name="Ohara R."/>
            <person name="Inamoto S."/>
            <person name="Aizawa H."/>
            <person name="Yuasa S."/>
            <person name="Nakajima D."/>
            <person name="Nagase T."/>
            <person name="Ohara O."/>
            <person name="Koga H."/>
        </authorList>
    </citation>
    <scope>NUCLEOTIDE SEQUENCE [LARGE SCALE MRNA] (ISOFORM 1)</scope>
    <source>
        <tissue>Brain</tissue>
    </source>
</reference>
<reference key="3">
    <citation type="journal article" date="2005" name="Science">
        <title>The transcriptional landscape of the mammalian genome.</title>
        <authorList>
            <person name="Carninci P."/>
            <person name="Kasukawa T."/>
            <person name="Katayama S."/>
            <person name="Gough J."/>
            <person name="Frith M.C."/>
            <person name="Maeda N."/>
            <person name="Oyama R."/>
            <person name="Ravasi T."/>
            <person name="Lenhard B."/>
            <person name="Wells C."/>
            <person name="Kodzius R."/>
            <person name="Shimokawa K."/>
            <person name="Bajic V.B."/>
            <person name="Brenner S.E."/>
            <person name="Batalov S."/>
            <person name="Forrest A.R."/>
            <person name="Zavolan M."/>
            <person name="Davis M.J."/>
            <person name="Wilming L.G."/>
            <person name="Aidinis V."/>
            <person name="Allen J.E."/>
            <person name="Ambesi-Impiombato A."/>
            <person name="Apweiler R."/>
            <person name="Aturaliya R.N."/>
            <person name="Bailey T.L."/>
            <person name="Bansal M."/>
            <person name="Baxter L."/>
            <person name="Beisel K.W."/>
            <person name="Bersano T."/>
            <person name="Bono H."/>
            <person name="Chalk A.M."/>
            <person name="Chiu K.P."/>
            <person name="Choudhary V."/>
            <person name="Christoffels A."/>
            <person name="Clutterbuck D.R."/>
            <person name="Crowe M.L."/>
            <person name="Dalla E."/>
            <person name="Dalrymple B.P."/>
            <person name="de Bono B."/>
            <person name="Della Gatta G."/>
            <person name="di Bernardo D."/>
            <person name="Down T."/>
            <person name="Engstrom P."/>
            <person name="Fagiolini M."/>
            <person name="Faulkner G."/>
            <person name="Fletcher C.F."/>
            <person name="Fukushima T."/>
            <person name="Furuno M."/>
            <person name="Futaki S."/>
            <person name="Gariboldi M."/>
            <person name="Georgii-Hemming P."/>
            <person name="Gingeras T.R."/>
            <person name="Gojobori T."/>
            <person name="Green R.E."/>
            <person name="Gustincich S."/>
            <person name="Harbers M."/>
            <person name="Hayashi Y."/>
            <person name="Hensch T.K."/>
            <person name="Hirokawa N."/>
            <person name="Hill D."/>
            <person name="Huminiecki L."/>
            <person name="Iacono M."/>
            <person name="Ikeo K."/>
            <person name="Iwama A."/>
            <person name="Ishikawa T."/>
            <person name="Jakt M."/>
            <person name="Kanapin A."/>
            <person name="Katoh M."/>
            <person name="Kawasawa Y."/>
            <person name="Kelso J."/>
            <person name="Kitamura H."/>
            <person name="Kitano H."/>
            <person name="Kollias G."/>
            <person name="Krishnan S.P."/>
            <person name="Kruger A."/>
            <person name="Kummerfeld S.K."/>
            <person name="Kurochkin I.V."/>
            <person name="Lareau L.F."/>
            <person name="Lazarevic D."/>
            <person name="Lipovich L."/>
            <person name="Liu J."/>
            <person name="Liuni S."/>
            <person name="McWilliam S."/>
            <person name="Madan Babu M."/>
            <person name="Madera M."/>
            <person name="Marchionni L."/>
            <person name="Matsuda H."/>
            <person name="Matsuzawa S."/>
            <person name="Miki H."/>
            <person name="Mignone F."/>
            <person name="Miyake S."/>
            <person name="Morris K."/>
            <person name="Mottagui-Tabar S."/>
            <person name="Mulder N."/>
            <person name="Nakano N."/>
            <person name="Nakauchi H."/>
            <person name="Ng P."/>
            <person name="Nilsson R."/>
            <person name="Nishiguchi S."/>
            <person name="Nishikawa S."/>
            <person name="Nori F."/>
            <person name="Ohara O."/>
            <person name="Okazaki Y."/>
            <person name="Orlando V."/>
            <person name="Pang K.C."/>
            <person name="Pavan W.J."/>
            <person name="Pavesi G."/>
            <person name="Pesole G."/>
            <person name="Petrovsky N."/>
            <person name="Piazza S."/>
            <person name="Reed J."/>
            <person name="Reid J.F."/>
            <person name="Ring B.Z."/>
            <person name="Ringwald M."/>
            <person name="Rost B."/>
            <person name="Ruan Y."/>
            <person name="Salzberg S.L."/>
            <person name="Sandelin A."/>
            <person name="Schneider C."/>
            <person name="Schoenbach C."/>
            <person name="Sekiguchi K."/>
            <person name="Semple C.A."/>
            <person name="Seno S."/>
            <person name="Sessa L."/>
            <person name="Sheng Y."/>
            <person name="Shibata Y."/>
            <person name="Shimada H."/>
            <person name="Shimada K."/>
            <person name="Silva D."/>
            <person name="Sinclair B."/>
            <person name="Sperling S."/>
            <person name="Stupka E."/>
            <person name="Sugiura K."/>
            <person name="Sultana R."/>
            <person name="Takenaka Y."/>
            <person name="Taki K."/>
            <person name="Tammoja K."/>
            <person name="Tan S.L."/>
            <person name="Tang S."/>
            <person name="Taylor M.S."/>
            <person name="Tegner J."/>
            <person name="Teichmann S.A."/>
            <person name="Ueda H.R."/>
            <person name="van Nimwegen E."/>
            <person name="Verardo R."/>
            <person name="Wei C.L."/>
            <person name="Yagi K."/>
            <person name="Yamanishi H."/>
            <person name="Zabarovsky E."/>
            <person name="Zhu S."/>
            <person name="Zimmer A."/>
            <person name="Hide W."/>
            <person name="Bult C."/>
            <person name="Grimmond S.M."/>
            <person name="Teasdale R.D."/>
            <person name="Liu E.T."/>
            <person name="Brusic V."/>
            <person name="Quackenbush J."/>
            <person name="Wahlestedt C."/>
            <person name="Mattick J.S."/>
            <person name="Hume D.A."/>
            <person name="Kai C."/>
            <person name="Sasaki D."/>
            <person name="Tomaru Y."/>
            <person name="Fukuda S."/>
            <person name="Kanamori-Katayama M."/>
            <person name="Suzuki M."/>
            <person name="Aoki J."/>
            <person name="Arakawa T."/>
            <person name="Iida J."/>
            <person name="Imamura K."/>
            <person name="Itoh M."/>
            <person name="Kato T."/>
            <person name="Kawaji H."/>
            <person name="Kawagashira N."/>
            <person name="Kawashima T."/>
            <person name="Kojima M."/>
            <person name="Kondo S."/>
            <person name="Konno H."/>
            <person name="Nakano K."/>
            <person name="Ninomiya N."/>
            <person name="Nishio T."/>
            <person name="Okada M."/>
            <person name="Plessy C."/>
            <person name="Shibata K."/>
            <person name="Shiraki T."/>
            <person name="Suzuki S."/>
            <person name="Tagami M."/>
            <person name="Waki K."/>
            <person name="Watahiki A."/>
            <person name="Okamura-Oho Y."/>
            <person name="Suzuki H."/>
            <person name="Kawai J."/>
            <person name="Hayashizaki Y."/>
        </authorList>
    </citation>
    <scope>NUCLEOTIDE SEQUENCE [LARGE SCALE MRNA] (ISOFORMS 1 AND 2)</scope>
    <source>
        <strain>C57BL/6J</strain>
        <tissue>Hippocampus</tissue>
        <tissue>Visual cortex</tissue>
    </source>
</reference>
<reference key="4">
    <citation type="journal article" date="2004" name="Genome Res.">
        <title>The status, quality, and expansion of the NIH full-length cDNA project: the Mammalian Gene Collection (MGC).</title>
        <authorList>
            <consortium name="The MGC Project Team"/>
        </authorList>
    </citation>
    <scope>NUCLEOTIDE SEQUENCE [LARGE SCALE MRNA] (ISOFORM 1)</scope>
    <source>
        <tissue>Retina</tissue>
    </source>
</reference>
<reference key="5">
    <citation type="journal article" date="2007" name="J. Neurochem.">
        <title>Lifeguard/neuronal membrane protein 35 regulates Fas ligand-mediated apoptosis in neurons via microdomain recruitment.</title>
        <authorList>
            <person name="Fernandez M."/>
            <person name="Segura M.F."/>
            <person name="Sole C."/>
            <person name="Colino A."/>
            <person name="Comella J.X."/>
            <person name="Cena V."/>
        </authorList>
    </citation>
    <scope>FUNCTION</scope>
    <scope>SUBCELLULAR LOCATION</scope>
    <scope>TISSUE SPECIFICITY</scope>
</reference>
<reference key="6">
    <citation type="journal article" date="2009" name="Apoptosis">
        <title>LFG: a candidate apoptosis regulatory gene family.</title>
        <authorList>
            <person name="Hu L."/>
            <person name="Smith T.F."/>
            <person name="Goldberger G."/>
        </authorList>
    </citation>
    <scope>GENE FAMILY</scope>
    <scope>NOMENCLATURE</scope>
</reference>
<reference key="7">
    <citation type="journal article" date="2011" name="J. Neurosci.">
        <title>Fas/CD95 regulatory protein Faim2 is neuroprotective after transient brain ischemia.</title>
        <authorList>
            <person name="Reich A."/>
            <person name="Spering C."/>
            <person name="Gertz K."/>
            <person name="Harms C."/>
            <person name="Gerhardt E."/>
            <person name="Kronenberg G."/>
            <person name="Nave K.A."/>
            <person name="Schwab M."/>
            <person name="Tauber S.C."/>
            <person name="Drinkut A."/>
            <person name="Harms K."/>
            <person name="Beier C.P."/>
            <person name="Voigt A."/>
            <person name="Goebbels S."/>
            <person name="Endres M."/>
            <person name="Schulz J.B."/>
        </authorList>
    </citation>
    <scope>FUNCTION</scope>
</reference>
<reference key="8">
    <citation type="journal article" date="2011" name="Proc. Natl. Acad. Sci. U.S.A.">
        <title>Antiapoptotic protein Lifeguard is required for survival and maintenance of Purkinje and granular cells.</title>
        <authorList>
            <person name="Hurtado de Mendoza T."/>
            <person name="Perez-Garcia C.G."/>
            <person name="Kroll T.T."/>
            <person name="Hoong N.H."/>
            <person name="O'Leary D.D."/>
            <person name="Verma I.M."/>
        </authorList>
    </citation>
    <scope>FUNCTION</scope>
    <scope>DISRUPTION PHENOTYPE</scope>
    <scope>TISSUE SPECIFICITY</scope>
</reference>
<sequence length="317" mass="35258">MTQGKLSVANKAPGTEGQQHQANGEKKDAPAVPSAPPSYEEATSGEGLKAGTFPQGPTAVPLHPSWAYVDPSGSSGYEGGFPAGHHEHFTTFSWDDQKVRRLFIRKVYTILLVQLLVTLAVVALFTFCDVVKDYVQANPGWYWASYAVFFATYLTLACCSGPRRHFPWNLILLTIFTLSMAYLTGMLSSYYNTTSVLLCLVITALVCLSVTIFSFQTKFDFTSCQGVLFVLLMTLFFSGLLLAVLLPFQYVPWLHAVYAVLGAGVFTLFLAFDTQLLMGNRRHSLSPEEYIFGALNIYLDIIYIFTFFLQLFGTNRE</sequence>